<proteinExistence type="inferred from homology"/>
<keyword id="KW-1185">Reference proteome</keyword>
<keyword id="KW-0687">Ribonucleoprotein</keyword>
<keyword id="KW-0689">Ribosomal protein</keyword>
<keyword id="KW-0694">RNA-binding</keyword>
<keyword id="KW-0699">rRNA-binding</keyword>
<gene>
    <name evidence="1" type="primary">rplO</name>
    <name type="ordered locus">ECA4012</name>
</gene>
<name>RL15_PECAS</name>
<feature type="chain" id="PRO_0000104720" description="Large ribosomal subunit protein uL15">
    <location>
        <begin position="1"/>
        <end position="144"/>
    </location>
</feature>
<feature type="region of interest" description="Disordered" evidence="2">
    <location>
        <begin position="1"/>
        <end position="53"/>
    </location>
</feature>
<feature type="compositionally biased region" description="Gly residues" evidence="2">
    <location>
        <begin position="21"/>
        <end position="31"/>
    </location>
</feature>
<protein>
    <recommendedName>
        <fullName evidence="1">Large ribosomal subunit protein uL15</fullName>
    </recommendedName>
    <alternativeName>
        <fullName evidence="3">50S ribosomal protein L15</fullName>
    </alternativeName>
</protein>
<dbReference type="EMBL" id="BX950851">
    <property type="protein sequence ID" value="CAG76909.1"/>
    <property type="molecule type" value="Genomic_DNA"/>
</dbReference>
<dbReference type="RefSeq" id="WP_011095501.1">
    <property type="nucleotide sequence ID" value="NC_004547.2"/>
</dbReference>
<dbReference type="SMR" id="Q6CZY9"/>
<dbReference type="STRING" id="218491.ECA4012"/>
<dbReference type="GeneID" id="57210676"/>
<dbReference type="KEGG" id="eca:ECA4012"/>
<dbReference type="eggNOG" id="COG0200">
    <property type="taxonomic scope" value="Bacteria"/>
</dbReference>
<dbReference type="HOGENOM" id="CLU_055188_4_2_6"/>
<dbReference type="OrthoDB" id="9810293at2"/>
<dbReference type="Proteomes" id="UP000007966">
    <property type="component" value="Chromosome"/>
</dbReference>
<dbReference type="GO" id="GO:0022625">
    <property type="term" value="C:cytosolic large ribosomal subunit"/>
    <property type="evidence" value="ECO:0007669"/>
    <property type="project" value="TreeGrafter"/>
</dbReference>
<dbReference type="GO" id="GO:0019843">
    <property type="term" value="F:rRNA binding"/>
    <property type="evidence" value="ECO:0007669"/>
    <property type="project" value="UniProtKB-UniRule"/>
</dbReference>
<dbReference type="GO" id="GO:0003735">
    <property type="term" value="F:structural constituent of ribosome"/>
    <property type="evidence" value="ECO:0007669"/>
    <property type="project" value="InterPro"/>
</dbReference>
<dbReference type="GO" id="GO:0006412">
    <property type="term" value="P:translation"/>
    <property type="evidence" value="ECO:0007669"/>
    <property type="project" value="UniProtKB-UniRule"/>
</dbReference>
<dbReference type="FunFam" id="3.100.10.10:FF:000003">
    <property type="entry name" value="50S ribosomal protein L15"/>
    <property type="match status" value="1"/>
</dbReference>
<dbReference type="Gene3D" id="3.100.10.10">
    <property type="match status" value="1"/>
</dbReference>
<dbReference type="HAMAP" id="MF_01341">
    <property type="entry name" value="Ribosomal_uL15"/>
    <property type="match status" value="1"/>
</dbReference>
<dbReference type="InterPro" id="IPR030878">
    <property type="entry name" value="Ribosomal_uL15"/>
</dbReference>
<dbReference type="InterPro" id="IPR021131">
    <property type="entry name" value="Ribosomal_uL15/eL18"/>
</dbReference>
<dbReference type="InterPro" id="IPR036227">
    <property type="entry name" value="Ribosomal_uL15/eL18_sf"/>
</dbReference>
<dbReference type="InterPro" id="IPR005749">
    <property type="entry name" value="Ribosomal_uL15_bac-type"/>
</dbReference>
<dbReference type="InterPro" id="IPR001196">
    <property type="entry name" value="Ribosomal_uL15_CS"/>
</dbReference>
<dbReference type="NCBIfam" id="TIGR01071">
    <property type="entry name" value="rplO_bact"/>
    <property type="match status" value="1"/>
</dbReference>
<dbReference type="PANTHER" id="PTHR12934">
    <property type="entry name" value="50S RIBOSOMAL PROTEIN L15"/>
    <property type="match status" value="1"/>
</dbReference>
<dbReference type="PANTHER" id="PTHR12934:SF11">
    <property type="entry name" value="LARGE RIBOSOMAL SUBUNIT PROTEIN UL15M"/>
    <property type="match status" value="1"/>
</dbReference>
<dbReference type="Pfam" id="PF00828">
    <property type="entry name" value="Ribosomal_L27A"/>
    <property type="match status" value="1"/>
</dbReference>
<dbReference type="SUPFAM" id="SSF52080">
    <property type="entry name" value="Ribosomal proteins L15p and L18e"/>
    <property type="match status" value="1"/>
</dbReference>
<dbReference type="PROSITE" id="PS00475">
    <property type="entry name" value="RIBOSOMAL_L15"/>
    <property type="match status" value="1"/>
</dbReference>
<sequence>MRLNTLSPAEGAKHAPKRLGRGIGSGLGKTGGRGHKGQNSRSGGGVRRGFEGGQMPLYRRLPKFGFTSRKAMITSEVRLSDLAKVEGDVVDLNTLKAANVIGIQIEFAKVILSGEVARPVTIRGLRVTKGARAAIEAAGGKIEE</sequence>
<accession>Q6CZY9</accession>
<organism>
    <name type="scientific">Pectobacterium atrosepticum (strain SCRI 1043 / ATCC BAA-672)</name>
    <name type="common">Erwinia carotovora subsp. atroseptica</name>
    <dbReference type="NCBI Taxonomy" id="218491"/>
    <lineage>
        <taxon>Bacteria</taxon>
        <taxon>Pseudomonadati</taxon>
        <taxon>Pseudomonadota</taxon>
        <taxon>Gammaproteobacteria</taxon>
        <taxon>Enterobacterales</taxon>
        <taxon>Pectobacteriaceae</taxon>
        <taxon>Pectobacterium</taxon>
    </lineage>
</organism>
<evidence type="ECO:0000255" key="1">
    <source>
        <dbReference type="HAMAP-Rule" id="MF_01341"/>
    </source>
</evidence>
<evidence type="ECO:0000256" key="2">
    <source>
        <dbReference type="SAM" id="MobiDB-lite"/>
    </source>
</evidence>
<evidence type="ECO:0000305" key="3"/>
<comment type="function">
    <text evidence="1">Binds to the 23S rRNA.</text>
</comment>
<comment type="subunit">
    <text evidence="1">Part of the 50S ribosomal subunit.</text>
</comment>
<comment type="similarity">
    <text evidence="1">Belongs to the universal ribosomal protein uL15 family.</text>
</comment>
<reference key="1">
    <citation type="journal article" date="2004" name="Proc. Natl. Acad. Sci. U.S.A.">
        <title>Genome sequence of the enterobacterial phytopathogen Erwinia carotovora subsp. atroseptica and characterization of virulence factors.</title>
        <authorList>
            <person name="Bell K.S."/>
            <person name="Sebaihia M."/>
            <person name="Pritchard L."/>
            <person name="Holden M.T.G."/>
            <person name="Hyman L.J."/>
            <person name="Holeva M.C."/>
            <person name="Thomson N.R."/>
            <person name="Bentley S.D."/>
            <person name="Churcher L.J.C."/>
            <person name="Mungall K."/>
            <person name="Atkin R."/>
            <person name="Bason N."/>
            <person name="Brooks K."/>
            <person name="Chillingworth T."/>
            <person name="Clark K."/>
            <person name="Doggett J."/>
            <person name="Fraser A."/>
            <person name="Hance Z."/>
            <person name="Hauser H."/>
            <person name="Jagels K."/>
            <person name="Moule S."/>
            <person name="Norbertczak H."/>
            <person name="Ormond D."/>
            <person name="Price C."/>
            <person name="Quail M.A."/>
            <person name="Sanders M."/>
            <person name="Walker D."/>
            <person name="Whitehead S."/>
            <person name="Salmond G.P.C."/>
            <person name="Birch P.R.J."/>
            <person name="Parkhill J."/>
            <person name="Toth I.K."/>
        </authorList>
    </citation>
    <scope>NUCLEOTIDE SEQUENCE [LARGE SCALE GENOMIC DNA]</scope>
    <source>
        <strain>SCRI 1043 / ATCC BAA-672</strain>
    </source>
</reference>